<evidence type="ECO:0000255" key="1">
    <source>
        <dbReference type="HAMAP-Rule" id="MF_01820"/>
    </source>
</evidence>
<evidence type="ECO:0000255" key="2">
    <source>
        <dbReference type="PROSITE-ProRule" id="PRU01058"/>
    </source>
</evidence>
<dbReference type="EC" id="3.6.1.-" evidence="1"/>
<dbReference type="EMBL" id="AE014133">
    <property type="protein sequence ID" value="AAN58109.1"/>
    <property type="molecule type" value="Genomic_DNA"/>
</dbReference>
<dbReference type="RefSeq" id="NP_720803.1">
    <property type="nucleotide sequence ID" value="NC_004350.2"/>
</dbReference>
<dbReference type="RefSeq" id="WP_002264900.1">
    <property type="nucleotide sequence ID" value="NC_004350.2"/>
</dbReference>
<dbReference type="SMR" id="Q8DVW1"/>
<dbReference type="STRING" id="210007.SMU_351"/>
<dbReference type="KEGG" id="smu:SMU_351"/>
<dbReference type="PATRIC" id="fig|210007.7.peg.305"/>
<dbReference type="eggNOG" id="COG1162">
    <property type="taxonomic scope" value="Bacteria"/>
</dbReference>
<dbReference type="HOGENOM" id="CLU_033617_2_1_9"/>
<dbReference type="OrthoDB" id="9809485at2"/>
<dbReference type="PhylomeDB" id="Q8DVW1"/>
<dbReference type="Proteomes" id="UP000002512">
    <property type="component" value="Chromosome"/>
</dbReference>
<dbReference type="GO" id="GO:0005737">
    <property type="term" value="C:cytoplasm"/>
    <property type="evidence" value="ECO:0007669"/>
    <property type="project" value="UniProtKB-SubCell"/>
</dbReference>
<dbReference type="GO" id="GO:0005525">
    <property type="term" value="F:GTP binding"/>
    <property type="evidence" value="ECO:0007669"/>
    <property type="project" value="UniProtKB-UniRule"/>
</dbReference>
<dbReference type="GO" id="GO:0003924">
    <property type="term" value="F:GTPase activity"/>
    <property type="evidence" value="ECO:0007669"/>
    <property type="project" value="UniProtKB-UniRule"/>
</dbReference>
<dbReference type="GO" id="GO:0046872">
    <property type="term" value="F:metal ion binding"/>
    <property type="evidence" value="ECO:0007669"/>
    <property type="project" value="UniProtKB-KW"/>
</dbReference>
<dbReference type="GO" id="GO:0019843">
    <property type="term" value="F:rRNA binding"/>
    <property type="evidence" value="ECO:0007669"/>
    <property type="project" value="UniProtKB-KW"/>
</dbReference>
<dbReference type="GO" id="GO:0042274">
    <property type="term" value="P:ribosomal small subunit biogenesis"/>
    <property type="evidence" value="ECO:0007669"/>
    <property type="project" value="UniProtKB-UniRule"/>
</dbReference>
<dbReference type="CDD" id="cd04466">
    <property type="entry name" value="S1_YloQ_GTPase"/>
    <property type="match status" value="1"/>
</dbReference>
<dbReference type="CDD" id="cd01854">
    <property type="entry name" value="YjeQ_EngC"/>
    <property type="match status" value="1"/>
</dbReference>
<dbReference type="Gene3D" id="2.40.50.140">
    <property type="entry name" value="Nucleic acid-binding proteins"/>
    <property type="match status" value="1"/>
</dbReference>
<dbReference type="Gene3D" id="3.40.50.300">
    <property type="entry name" value="P-loop containing nucleotide triphosphate hydrolases"/>
    <property type="match status" value="1"/>
</dbReference>
<dbReference type="Gene3D" id="1.10.40.50">
    <property type="entry name" value="Probable gtpase engc, domain 3"/>
    <property type="match status" value="1"/>
</dbReference>
<dbReference type="HAMAP" id="MF_01820">
    <property type="entry name" value="GTPase_RsgA"/>
    <property type="match status" value="1"/>
</dbReference>
<dbReference type="InterPro" id="IPR030378">
    <property type="entry name" value="G_CP_dom"/>
</dbReference>
<dbReference type="InterPro" id="IPR012340">
    <property type="entry name" value="NA-bd_OB-fold"/>
</dbReference>
<dbReference type="InterPro" id="IPR027417">
    <property type="entry name" value="P-loop_NTPase"/>
</dbReference>
<dbReference type="InterPro" id="IPR004881">
    <property type="entry name" value="Ribosome_biogen_GTPase_RsgA"/>
</dbReference>
<dbReference type="InterPro" id="IPR010914">
    <property type="entry name" value="RsgA_GTPase_dom"/>
</dbReference>
<dbReference type="InterPro" id="IPR031944">
    <property type="entry name" value="RsgA_N"/>
</dbReference>
<dbReference type="NCBIfam" id="TIGR00157">
    <property type="entry name" value="ribosome small subunit-dependent GTPase A"/>
    <property type="match status" value="1"/>
</dbReference>
<dbReference type="PANTHER" id="PTHR32120">
    <property type="entry name" value="SMALL RIBOSOMAL SUBUNIT BIOGENESIS GTPASE RSGA"/>
    <property type="match status" value="1"/>
</dbReference>
<dbReference type="PANTHER" id="PTHR32120:SF11">
    <property type="entry name" value="SMALL RIBOSOMAL SUBUNIT BIOGENESIS GTPASE RSGA 1, MITOCHONDRIAL-RELATED"/>
    <property type="match status" value="1"/>
</dbReference>
<dbReference type="Pfam" id="PF03193">
    <property type="entry name" value="RsgA_GTPase"/>
    <property type="match status" value="1"/>
</dbReference>
<dbReference type="Pfam" id="PF16745">
    <property type="entry name" value="RsgA_N"/>
    <property type="match status" value="1"/>
</dbReference>
<dbReference type="SUPFAM" id="SSF50249">
    <property type="entry name" value="Nucleic acid-binding proteins"/>
    <property type="match status" value="1"/>
</dbReference>
<dbReference type="SUPFAM" id="SSF52540">
    <property type="entry name" value="P-loop containing nucleoside triphosphate hydrolases"/>
    <property type="match status" value="1"/>
</dbReference>
<dbReference type="PROSITE" id="PS50936">
    <property type="entry name" value="ENGC_GTPASE"/>
    <property type="match status" value="1"/>
</dbReference>
<dbReference type="PROSITE" id="PS51721">
    <property type="entry name" value="G_CP"/>
    <property type="match status" value="1"/>
</dbReference>
<organism>
    <name type="scientific">Streptococcus mutans serotype c (strain ATCC 700610 / UA159)</name>
    <dbReference type="NCBI Taxonomy" id="210007"/>
    <lineage>
        <taxon>Bacteria</taxon>
        <taxon>Bacillati</taxon>
        <taxon>Bacillota</taxon>
        <taxon>Bacilli</taxon>
        <taxon>Lactobacillales</taxon>
        <taxon>Streptococcaceae</taxon>
        <taxon>Streptococcus</taxon>
    </lineage>
</organism>
<sequence>MQGKIIESLAGFYYVESDGQIYQTRARGNFRKKGHKPYVGDEVDFSAKENSEGYILAIHERKNSLVRPPIVNIDQAVVIISAKEPDFNHNLLDRFLILLEHRKISPIIYLSKTDLLEDLDEFKKVQKQYQKIGYYFVYYLEDLTPLLKDKITVFMGQTGVGKTTLLNTLAPDLALETNEISDSLGRGRHTTRAVTLYNIYGGKIADTPGFSSLDYEITSSEELNAAFPELLKLSAACKFRSCTHTHEPGCAVKLALAQRKIWEKRYQTYLQILSEIENRRETYKKVLKRK</sequence>
<accession>Q8DVW1</accession>
<proteinExistence type="inferred from homology"/>
<keyword id="KW-0963">Cytoplasm</keyword>
<keyword id="KW-0342">GTP-binding</keyword>
<keyword id="KW-0378">Hydrolase</keyword>
<keyword id="KW-0479">Metal-binding</keyword>
<keyword id="KW-0547">Nucleotide-binding</keyword>
<keyword id="KW-1185">Reference proteome</keyword>
<keyword id="KW-0690">Ribosome biogenesis</keyword>
<keyword id="KW-0694">RNA-binding</keyword>
<keyword id="KW-0699">rRNA-binding</keyword>
<keyword id="KW-0862">Zinc</keyword>
<gene>
    <name evidence="1" type="primary">rsgA</name>
    <name type="ordered locus">SMU_351</name>
</gene>
<protein>
    <recommendedName>
        <fullName evidence="1">Small ribosomal subunit biogenesis GTPase RsgA</fullName>
        <ecNumber evidence="1">3.6.1.-</ecNumber>
    </recommendedName>
</protein>
<reference key="1">
    <citation type="journal article" date="2002" name="Proc. Natl. Acad. Sci. U.S.A.">
        <title>Genome sequence of Streptococcus mutans UA159, a cariogenic dental pathogen.</title>
        <authorList>
            <person name="Ajdic D.J."/>
            <person name="McShan W.M."/>
            <person name="McLaughlin R.E."/>
            <person name="Savic G."/>
            <person name="Chang J."/>
            <person name="Carson M.B."/>
            <person name="Primeaux C."/>
            <person name="Tian R."/>
            <person name="Kenton S."/>
            <person name="Jia H.G."/>
            <person name="Lin S.P."/>
            <person name="Qian Y."/>
            <person name="Li S."/>
            <person name="Zhu H."/>
            <person name="Najar F.Z."/>
            <person name="Lai H."/>
            <person name="White J."/>
            <person name="Roe B.A."/>
            <person name="Ferretti J.J."/>
        </authorList>
    </citation>
    <scope>NUCLEOTIDE SEQUENCE [LARGE SCALE GENOMIC DNA]</scope>
    <source>
        <strain>ATCC 700610 / UA159</strain>
    </source>
</reference>
<comment type="function">
    <text evidence="1">One of several proteins that assist in the late maturation steps of the functional core of the 30S ribosomal subunit. Helps release RbfA from mature subunits. May play a role in the assembly of ribosomal proteins into the subunit. Circularly permuted GTPase that catalyzes slow GTP hydrolysis, GTPase activity is stimulated by the 30S ribosomal subunit.</text>
</comment>
<comment type="cofactor">
    <cofactor evidence="1">
        <name>Zn(2+)</name>
        <dbReference type="ChEBI" id="CHEBI:29105"/>
    </cofactor>
    <text evidence="1">Binds 1 zinc ion per subunit.</text>
</comment>
<comment type="subunit">
    <text evidence="1">Monomer. Associates with 30S ribosomal subunit, binds 16S rRNA.</text>
</comment>
<comment type="subcellular location">
    <subcellularLocation>
        <location evidence="1">Cytoplasm</location>
    </subcellularLocation>
</comment>
<comment type="similarity">
    <text evidence="1">Belongs to the TRAFAC class YlqF/YawG GTPase family. RsgA subfamily.</text>
</comment>
<name>RSGA_STRMU</name>
<feature type="chain" id="PRO_0000171527" description="Small ribosomal subunit biogenesis GTPase RsgA">
    <location>
        <begin position="1"/>
        <end position="290"/>
    </location>
</feature>
<feature type="domain" description="CP-type G" evidence="2">
    <location>
        <begin position="62"/>
        <end position="213"/>
    </location>
</feature>
<feature type="binding site" evidence="1">
    <location>
        <begin position="111"/>
        <end position="114"/>
    </location>
    <ligand>
        <name>GTP</name>
        <dbReference type="ChEBI" id="CHEBI:37565"/>
    </ligand>
</feature>
<feature type="binding site" evidence="1">
    <location>
        <begin position="156"/>
        <end position="164"/>
    </location>
    <ligand>
        <name>GTP</name>
        <dbReference type="ChEBI" id="CHEBI:37565"/>
    </ligand>
</feature>
<feature type="binding site" evidence="1">
    <location>
        <position position="237"/>
    </location>
    <ligand>
        <name>Zn(2+)</name>
        <dbReference type="ChEBI" id="CHEBI:29105"/>
    </ligand>
</feature>
<feature type="binding site" evidence="1">
    <location>
        <position position="242"/>
    </location>
    <ligand>
        <name>Zn(2+)</name>
        <dbReference type="ChEBI" id="CHEBI:29105"/>
    </ligand>
</feature>
<feature type="binding site" evidence="1">
    <location>
        <position position="244"/>
    </location>
    <ligand>
        <name>Zn(2+)</name>
        <dbReference type="ChEBI" id="CHEBI:29105"/>
    </ligand>
</feature>
<feature type="binding site" evidence="1">
    <location>
        <position position="250"/>
    </location>
    <ligand>
        <name>Zn(2+)</name>
        <dbReference type="ChEBI" id="CHEBI:29105"/>
    </ligand>
</feature>